<reference key="1">
    <citation type="journal article" date="1999" name="Nature">
        <title>Sequence and analysis of chromosome 2 of the plant Arabidopsis thaliana.</title>
        <authorList>
            <person name="Lin X."/>
            <person name="Kaul S."/>
            <person name="Rounsley S.D."/>
            <person name="Shea T.P."/>
            <person name="Benito M.-I."/>
            <person name="Town C.D."/>
            <person name="Fujii C.Y."/>
            <person name="Mason T.M."/>
            <person name="Bowman C.L."/>
            <person name="Barnstead M.E."/>
            <person name="Feldblyum T.V."/>
            <person name="Buell C.R."/>
            <person name="Ketchum K.A."/>
            <person name="Lee J.J."/>
            <person name="Ronning C.M."/>
            <person name="Koo H.L."/>
            <person name="Moffat K.S."/>
            <person name="Cronin L.A."/>
            <person name="Shen M."/>
            <person name="Pai G."/>
            <person name="Van Aken S."/>
            <person name="Umayam L."/>
            <person name="Tallon L.J."/>
            <person name="Gill J.E."/>
            <person name="Adams M.D."/>
            <person name="Carrera A.J."/>
            <person name="Creasy T.H."/>
            <person name="Goodman H.M."/>
            <person name="Somerville C.R."/>
            <person name="Copenhaver G.P."/>
            <person name="Preuss D."/>
            <person name="Nierman W.C."/>
            <person name="White O."/>
            <person name="Eisen J.A."/>
            <person name="Salzberg S.L."/>
            <person name="Fraser C.M."/>
            <person name="Venter J.C."/>
        </authorList>
    </citation>
    <scope>NUCLEOTIDE SEQUENCE [LARGE SCALE GENOMIC DNA]</scope>
    <source>
        <strain>cv. Columbia</strain>
    </source>
</reference>
<reference key="2">
    <citation type="journal article" date="2017" name="Plant J.">
        <title>Araport11: a complete reannotation of the Arabidopsis thaliana reference genome.</title>
        <authorList>
            <person name="Cheng C.Y."/>
            <person name="Krishnakumar V."/>
            <person name="Chan A.P."/>
            <person name="Thibaud-Nissen F."/>
            <person name="Schobel S."/>
            <person name="Town C.D."/>
        </authorList>
    </citation>
    <scope>GENOME REANNOTATION</scope>
    <source>
        <strain>cv. Columbia</strain>
    </source>
</reference>
<reference key="3">
    <citation type="submission" date="2004-09" db="EMBL/GenBank/DDBJ databases">
        <title>Large-scale analysis of RIKEN Arabidopsis full-length (RAFL) cDNAs.</title>
        <authorList>
            <person name="Totoki Y."/>
            <person name="Seki M."/>
            <person name="Ishida J."/>
            <person name="Nakajima M."/>
            <person name="Enju A."/>
            <person name="Kamiya A."/>
            <person name="Narusaka M."/>
            <person name="Shin-i T."/>
            <person name="Nakagawa M."/>
            <person name="Sakamoto N."/>
            <person name="Oishi K."/>
            <person name="Kohara Y."/>
            <person name="Kobayashi M."/>
            <person name="Toyoda A."/>
            <person name="Sakaki Y."/>
            <person name="Sakurai T."/>
            <person name="Iida K."/>
            <person name="Akiyama K."/>
            <person name="Satou M."/>
            <person name="Toyoda T."/>
            <person name="Konagaya A."/>
            <person name="Carninci P."/>
            <person name="Kawai J."/>
            <person name="Hayashizaki Y."/>
            <person name="Shinozaki K."/>
        </authorList>
    </citation>
    <scope>NUCLEOTIDE SEQUENCE [LARGE SCALE MRNA]</scope>
    <source>
        <strain>cv. Columbia</strain>
    </source>
</reference>
<reference key="4">
    <citation type="submission" date="2003-10" db="EMBL/GenBank/DDBJ databases">
        <title>Arabidopsis ORF clones.</title>
        <authorList>
            <person name="Cheuk R.F."/>
            <person name="Chen H."/>
            <person name="Kim C.J."/>
            <person name="Shinn P."/>
            <person name="Carninci P."/>
            <person name="Hayashizaki Y."/>
            <person name="Ishida J."/>
            <person name="Kamiya A."/>
            <person name="Kawai J."/>
            <person name="Narusaka M."/>
            <person name="Sakurai T."/>
            <person name="Satou M."/>
            <person name="Seki M."/>
            <person name="Shinozaki K."/>
            <person name="Ecker J.R."/>
        </authorList>
    </citation>
    <scope>NUCLEOTIDE SEQUENCE [LARGE SCALE MRNA] OF 86-354</scope>
    <source>
        <strain>cv. Columbia</strain>
    </source>
</reference>
<reference key="5">
    <citation type="journal article" date="2003" name="J. Exp. Bot.">
        <title>Is trehalose-6-phosphate a regulator of sugar metabolism in plants?</title>
        <authorList>
            <person name="Eastmond P.J."/>
            <person name="Li Y."/>
            <person name="Graham I.A."/>
        </authorList>
    </citation>
    <scope>GENE FAMILY</scope>
</reference>
<reference key="6">
    <citation type="journal article" date="2004" name="Plant Physiol.">
        <title>Trehalose mediated growth inhibition of Arabidopsis seedlings is due to trehalose-6-phosphate accumulation.</title>
        <authorList>
            <person name="Schluepmann H."/>
            <person name="van Dijken A.J.H."/>
            <person name="Aghdasi M."/>
            <person name="Wobbes B."/>
            <person name="Paul M."/>
            <person name="Smeekens S.C.M."/>
        </authorList>
    </citation>
    <scope>INDUCTION</scope>
    <scope>NOMENCLATURE</scope>
</reference>
<proteinExistence type="evidence at transcript level"/>
<feature type="chain" id="PRO_0000417647" description="Probable trehalose-phosphate phosphatase E">
    <location>
        <begin position="1"/>
        <end position="354"/>
    </location>
</feature>
<organism>
    <name type="scientific">Arabidopsis thaliana</name>
    <name type="common">Mouse-ear cress</name>
    <dbReference type="NCBI Taxonomy" id="3702"/>
    <lineage>
        <taxon>Eukaryota</taxon>
        <taxon>Viridiplantae</taxon>
        <taxon>Streptophyta</taxon>
        <taxon>Embryophyta</taxon>
        <taxon>Tracheophyta</taxon>
        <taxon>Spermatophyta</taxon>
        <taxon>Magnoliopsida</taxon>
        <taxon>eudicotyledons</taxon>
        <taxon>Gunneridae</taxon>
        <taxon>Pentapetalae</taxon>
        <taxon>rosids</taxon>
        <taxon>malvids</taxon>
        <taxon>Brassicales</taxon>
        <taxon>Brassicaceae</taxon>
        <taxon>Camelineae</taxon>
        <taxon>Arabidopsis</taxon>
    </lineage>
</organism>
<gene>
    <name type="primary">TPPE</name>
    <name type="ordered locus">At2g22190</name>
    <name type="ORF">T26C19.15</name>
</gene>
<accession>Q67X99</accession>
<accession>Q9SIE5</accession>
<name>TPPE_ARATH</name>
<protein>
    <recommendedName>
        <fullName>Probable trehalose-phosphate phosphatase E</fullName>
        <shortName>AtTPPE</shortName>
        <ecNumber>3.1.3.12</ecNumber>
    </recommendedName>
    <alternativeName>
        <fullName>Trehalose 6-phosphate phosphatase</fullName>
    </alternativeName>
</protein>
<sequence>MVRFIEENITKMLETKAISNSEVLYVGGDDGDTSPTTKVLHDFQINSGGGLIRSWVDSMRACSPTRPKSFNSQSCWIKEHPSALNMFEEILHKSEGKQIVMFLDYDGTLSPIVDDPDRAFMSKKMRNTVRKLAKCFPTAIVSGRCREKVSSFVKLTELYYAGSHGMDIKGPEQGSKYKKENQSLLCQPATEFLPVINEVYKKLVENTQSIPGAKVENNKFCASVHFRCVEENKWSDLAHQVRSVLKNYPKLMLTQGRKVLEIRPIIKWDKGKALEFLLESLGYDNCTDVFPIYIGDDRTDEDAFKILRDKKQGLGILVSKYAKETNASYSLQEPDEVMVFLERLVEWKQSRCGA</sequence>
<dbReference type="EC" id="3.1.3.12"/>
<dbReference type="EMBL" id="AC007168">
    <property type="protein sequence ID" value="AAD23621.1"/>
    <property type="status" value="ALT_SEQ"/>
    <property type="molecule type" value="Genomic_DNA"/>
</dbReference>
<dbReference type="EMBL" id="CP002685">
    <property type="protein sequence ID" value="AEC07276.1"/>
    <property type="molecule type" value="Genomic_DNA"/>
</dbReference>
<dbReference type="EMBL" id="AK176920">
    <property type="protein sequence ID" value="BAD44683.1"/>
    <property type="molecule type" value="mRNA"/>
</dbReference>
<dbReference type="EMBL" id="BT010648">
    <property type="protein sequence ID" value="AAQ89670.1"/>
    <property type="molecule type" value="mRNA"/>
</dbReference>
<dbReference type="PIR" id="A84610">
    <property type="entry name" value="A84610"/>
</dbReference>
<dbReference type="RefSeq" id="NP_179809.2">
    <property type="nucleotide sequence ID" value="NM_127787.3"/>
</dbReference>
<dbReference type="SMR" id="Q67X99"/>
<dbReference type="BioGRID" id="2106">
    <property type="interactions" value="1"/>
</dbReference>
<dbReference type="FunCoup" id="Q67X99">
    <property type="interactions" value="172"/>
</dbReference>
<dbReference type="IntAct" id="Q67X99">
    <property type="interactions" value="1"/>
</dbReference>
<dbReference type="STRING" id="3702.Q67X99"/>
<dbReference type="PaxDb" id="3702-AT2G22190.1"/>
<dbReference type="DNASU" id="816753"/>
<dbReference type="EnsemblPlants" id="AT2G22190.1">
    <property type="protein sequence ID" value="AT2G22190.1"/>
    <property type="gene ID" value="AT2G22190"/>
</dbReference>
<dbReference type="GeneID" id="816753"/>
<dbReference type="Gramene" id="AT2G22190.1">
    <property type="protein sequence ID" value="AT2G22190.1"/>
    <property type="gene ID" value="AT2G22190"/>
</dbReference>
<dbReference type="KEGG" id="ath:AT2G22190"/>
<dbReference type="Araport" id="AT2G22190"/>
<dbReference type="TAIR" id="AT2G22190">
    <property type="gene designation" value="TPPE"/>
</dbReference>
<dbReference type="eggNOG" id="KOG1050">
    <property type="taxonomic scope" value="Eukaryota"/>
</dbReference>
<dbReference type="HOGENOM" id="CLU_037265_1_1_1"/>
<dbReference type="InParanoid" id="Q67X99"/>
<dbReference type="OMA" id="NNQSCWI"/>
<dbReference type="OrthoDB" id="411251at2759"/>
<dbReference type="PhylomeDB" id="Q67X99"/>
<dbReference type="UniPathway" id="UPA00299"/>
<dbReference type="PRO" id="PR:Q67X99"/>
<dbReference type="Proteomes" id="UP000006548">
    <property type="component" value="Chromosome 2"/>
</dbReference>
<dbReference type="ExpressionAtlas" id="Q67X99">
    <property type="expression patterns" value="baseline and differential"/>
</dbReference>
<dbReference type="GO" id="GO:0009507">
    <property type="term" value="C:chloroplast"/>
    <property type="evidence" value="ECO:0000314"/>
    <property type="project" value="TAIR"/>
</dbReference>
<dbReference type="GO" id="GO:0004805">
    <property type="term" value="F:trehalose-phosphatase activity"/>
    <property type="evidence" value="ECO:0000314"/>
    <property type="project" value="TAIR"/>
</dbReference>
<dbReference type="GO" id="GO:0005992">
    <property type="term" value="P:trehalose biosynthetic process"/>
    <property type="evidence" value="ECO:0007669"/>
    <property type="project" value="UniProtKB-UniPathway"/>
</dbReference>
<dbReference type="CDD" id="cd01627">
    <property type="entry name" value="HAD_TPP"/>
    <property type="match status" value="1"/>
</dbReference>
<dbReference type="FunFam" id="3.40.50.1000:FF:000073">
    <property type="entry name" value="Trehalose 6-phosphate phosphatase"/>
    <property type="match status" value="1"/>
</dbReference>
<dbReference type="FunFam" id="3.40.50.1000:FF:000099">
    <property type="entry name" value="Trehalose 6-phosphate phosphatase"/>
    <property type="match status" value="1"/>
</dbReference>
<dbReference type="Gene3D" id="3.40.50.1000">
    <property type="entry name" value="HAD superfamily/HAD-like"/>
    <property type="match status" value="2"/>
</dbReference>
<dbReference type="InterPro" id="IPR036412">
    <property type="entry name" value="HAD-like_sf"/>
</dbReference>
<dbReference type="InterPro" id="IPR006379">
    <property type="entry name" value="HAD-SF_hydro_IIB"/>
</dbReference>
<dbReference type="InterPro" id="IPR023214">
    <property type="entry name" value="HAD_sf"/>
</dbReference>
<dbReference type="InterPro" id="IPR044651">
    <property type="entry name" value="OTSB-like"/>
</dbReference>
<dbReference type="InterPro" id="IPR003337">
    <property type="entry name" value="Trehalose_PPase"/>
</dbReference>
<dbReference type="NCBIfam" id="TIGR01484">
    <property type="entry name" value="HAD-SF-IIB"/>
    <property type="match status" value="1"/>
</dbReference>
<dbReference type="NCBIfam" id="TIGR00685">
    <property type="entry name" value="T6PP"/>
    <property type="match status" value="1"/>
</dbReference>
<dbReference type="PANTHER" id="PTHR43768">
    <property type="entry name" value="TREHALOSE 6-PHOSPHATE PHOSPHATASE"/>
    <property type="match status" value="1"/>
</dbReference>
<dbReference type="PANTHER" id="PTHR43768:SF3">
    <property type="entry name" value="TREHALOSE 6-PHOSPHATE PHOSPHATASE"/>
    <property type="match status" value="1"/>
</dbReference>
<dbReference type="Pfam" id="PF02358">
    <property type="entry name" value="Trehalose_PPase"/>
    <property type="match status" value="1"/>
</dbReference>
<dbReference type="SUPFAM" id="SSF56784">
    <property type="entry name" value="HAD-like"/>
    <property type="match status" value="1"/>
</dbReference>
<keyword id="KW-0378">Hydrolase</keyword>
<keyword id="KW-1185">Reference proteome</keyword>
<keyword id="KW-0346">Stress response</keyword>
<evidence type="ECO:0000250" key="1"/>
<evidence type="ECO:0000269" key="2">
    <source>
    </source>
</evidence>
<evidence type="ECO:0000305" key="3"/>
<comment type="function">
    <text evidence="1">Removes the phosphate from trehalose 6-phosphate to produce free trehalose. Trehalose accumulation in plant may improve abiotic stress tolerance (By similarity).</text>
</comment>
<comment type="catalytic activity">
    <reaction>
        <text>alpha,alpha-trehalose 6-phosphate + H2O = alpha,alpha-trehalose + phosphate</text>
        <dbReference type="Rhea" id="RHEA:23420"/>
        <dbReference type="ChEBI" id="CHEBI:15377"/>
        <dbReference type="ChEBI" id="CHEBI:16551"/>
        <dbReference type="ChEBI" id="CHEBI:43474"/>
        <dbReference type="ChEBI" id="CHEBI:58429"/>
        <dbReference type="EC" id="3.1.3.12"/>
    </reaction>
</comment>
<comment type="cofactor">
    <cofactor evidence="1">
        <name>a divalent metal cation</name>
        <dbReference type="ChEBI" id="CHEBI:60240"/>
    </cofactor>
</comment>
<comment type="pathway">
    <text>Glycan biosynthesis; trehalose biosynthesis.</text>
</comment>
<comment type="induction">
    <text evidence="2">Not induced by trehalose.</text>
</comment>
<comment type="similarity">
    <text evidence="3">Belongs to the trehalose phosphatase family.</text>
</comment>
<comment type="sequence caution" evidence="3">
    <conflict type="erroneous gene model prediction">
        <sequence resource="EMBL-CDS" id="AAD23621"/>
    </conflict>
</comment>